<dbReference type="EC" id="2.3.2.27"/>
<dbReference type="EMBL" id="AC011807">
    <property type="protein sequence ID" value="AAG13057.1"/>
    <property type="molecule type" value="Genomic_DNA"/>
</dbReference>
<dbReference type="EMBL" id="CP002684">
    <property type="protein sequence ID" value="AEE32475.1"/>
    <property type="molecule type" value="Genomic_DNA"/>
</dbReference>
<dbReference type="EMBL" id="AK118346">
    <property type="protein sequence ID" value="BAC42960.1"/>
    <property type="molecule type" value="mRNA"/>
</dbReference>
<dbReference type="EMBL" id="BT029013">
    <property type="protein sequence ID" value="ABI93922.1"/>
    <property type="molecule type" value="mRNA"/>
</dbReference>
<dbReference type="PIR" id="E96534">
    <property type="entry name" value="E96534"/>
</dbReference>
<dbReference type="RefSeq" id="NP_175400.1">
    <property type="nucleotide sequence ID" value="NM_103865.4"/>
</dbReference>
<dbReference type="SMR" id="Q9FXA4"/>
<dbReference type="FunCoup" id="Q9FXA4">
    <property type="interactions" value="13"/>
</dbReference>
<dbReference type="STRING" id="3702.Q9FXA4"/>
<dbReference type="PaxDb" id="3702-AT1G49780.1"/>
<dbReference type="ProteomicsDB" id="226254"/>
<dbReference type="EnsemblPlants" id="AT1G49780.1">
    <property type="protein sequence ID" value="AT1G49780.1"/>
    <property type="gene ID" value="AT1G49780"/>
</dbReference>
<dbReference type="GeneID" id="841401"/>
<dbReference type="Gramene" id="AT1G49780.1">
    <property type="protein sequence ID" value="AT1G49780.1"/>
    <property type="gene ID" value="AT1G49780"/>
</dbReference>
<dbReference type="KEGG" id="ath:AT1G49780"/>
<dbReference type="Araport" id="AT1G49780"/>
<dbReference type="TAIR" id="AT1G49780">
    <property type="gene designation" value="PUB26"/>
</dbReference>
<dbReference type="eggNOG" id="ENOG502QRXY">
    <property type="taxonomic scope" value="Eukaryota"/>
</dbReference>
<dbReference type="HOGENOM" id="CLU_006348_1_1_1"/>
<dbReference type="InParanoid" id="Q9FXA4"/>
<dbReference type="OMA" id="DCIANSD"/>
<dbReference type="OrthoDB" id="10064100at2759"/>
<dbReference type="PhylomeDB" id="Q9FXA4"/>
<dbReference type="UniPathway" id="UPA00143"/>
<dbReference type="PRO" id="PR:Q9FXA4"/>
<dbReference type="Proteomes" id="UP000006548">
    <property type="component" value="Chromosome 1"/>
</dbReference>
<dbReference type="ExpressionAtlas" id="Q9FXA4">
    <property type="expression patterns" value="baseline and differential"/>
</dbReference>
<dbReference type="GO" id="GO:0061630">
    <property type="term" value="F:ubiquitin protein ligase activity"/>
    <property type="evidence" value="ECO:0000314"/>
    <property type="project" value="TAIR"/>
</dbReference>
<dbReference type="GO" id="GO:0098542">
    <property type="term" value="P:defense response to other organism"/>
    <property type="evidence" value="ECO:0000315"/>
    <property type="project" value="TAIR"/>
</dbReference>
<dbReference type="GO" id="GO:0016567">
    <property type="term" value="P:protein ubiquitination"/>
    <property type="evidence" value="ECO:0000314"/>
    <property type="project" value="TAIR"/>
</dbReference>
<dbReference type="CDD" id="cd16664">
    <property type="entry name" value="RING-Ubox_PUB"/>
    <property type="match status" value="1"/>
</dbReference>
<dbReference type="FunFam" id="3.30.40.10:FF:001168">
    <property type="entry name" value="U-box domain-containing protein 31"/>
    <property type="match status" value="1"/>
</dbReference>
<dbReference type="Gene3D" id="1.25.10.10">
    <property type="entry name" value="Leucine-rich Repeat Variant"/>
    <property type="match status" value="1"/>
</dbReference>
<dbReference type="Gene3D" id="3.30.40.10">
    <property type="entry name" value="Zinc/RING finger domain, C3HC4 (zinc finger)"/>
    <property type="match status" value="1"/>
</dbReference>
<dbReference type="InterPro" id="IPR011989">
    <property type="entry name" value="ARM-like"/>
</dbReference>
<dbReference type="InterPro" id="IPR016024">
    <property type="entry name" value="ARM-type_fold"/>
</dbReference>
<dbReference type="InterPro" id="IPR045185">
    <property type="entry name" value="PUB22/23/24-like"/>
</dbReference>
<dbReference type="InterPro" id="IPR045210">
    <property type="entry name" value="RING-Ubox_PUB"/>
</dbReference>
<dbReference type="InterPro" id="IPR003613">
    <property type="entry name" value="Ubox_domain"/>
</dbReference>
<dbReference type="InterPro" id="IPR013083">
    <property type="entry name" value="Znf_RING/FYVE/PHD"/>
</dbReference>
<dbReference type="PANTHER" id="PTHR22849:SF112">
    <property type="entry name" value="U-BOX DOMAIN-CONTAINING PROTEIN 26"/>
    <property type="match status" value="1"/>
</dbReference>
<dbReference type="PANTHER" id="PTHR22849">
    <property type="entry name" value="WDSAM1 PROTEIN"/>
    <property type="match status" value="1"/>
</dbReference>
<dbReference type="Pfam" id="PF04564">
    <property type="entry name" value="U-box"/>
    <property type="match status" value="1"/>
</dbReference>
<dbReference type="SMART" id="SM00504">
    <property type="entry name" value="Ubox"/>
    <property type="match status" value="1"/>
</dbReference>
<dbReference type="SUPFAM" id="SSF48371">
    <property type="entry name" value="ARM repeat"/>
    <property type="match status" value="1"/>
</dbReference>
<dbReference type="SUPFAM" id="SSF57850">
    <property type="entry name" value="RING/U-box"/>
    <property type="match status" value="1"/>
</dbReference>
<dbReference type="PROSITE" id="PS51698">
    <property type="entry name" value="U_BOX"/>
    <property type="match status" value="1"/>
</dbReference>
<gene>
    <name type="primary">PUB26</name>
    <name type="ordered locus">At1g49780</name>
    <name type="ORF">F14J22.1</name>
</gene>
<protein>
    <recommendedName>
        <fullName>U-box domain-containing protein 26</fullName>
        <ecNumber>2.3.2.27</ecNumber>
    </recommendedName>
    <alternativeName>
        <fullName>Plant U-box protein 26</fullName>
    </alternativeName>
    <alternativeName>
        <fullName evidence="2">RING-type E3 ubiquitin transferase PUB26</fullName>
    </alternativeName>
</protein>
<comment type="function">
    <text evidence="1">Functions as an E3 ubiquitin ligase.</text>
</comment>
<comment type="catalytic activity">
    <reaction>
        <text>S-ubiquitinyl-[E2 ubiquitin-conjugating enzyme]-L-cysteine + [acceptor protein]-L-lysine = [E2 ubiquitin-conjugating enzyme]-L-cysteine + N(6)-ubiquitinyl-[acceptor protein]-L-lysine.</text>
        <dbReference type="EC" id="2.3.2.27"/>
    </reaction>
</comment>
<comment type="pathway">
    <text>Protein modification; protein ubiquitination.</text>
</comment>
<keyword id="KW-1185">Reference proteome</keyword>
<keyword id="KW-0808">Transferase</keyword>
<keyword id="KW-0833">Ubl conjugation pathway</keyword>
<accession>Q9FXA4</accession>
<accession>Q8GXA0</accession>
<evidence type="ECO:0000250" key="1"/>
<evidence type="ECO:0000305" key="2"/>
<feature type="chain" id="PRO_0000322170" description="U-box domain-containing protein 26">
    <location>
        <begin position="1"/>
        <end position="421"/>
    </location>
</feature>
<feature type="domain" description="U-box">
    <location>
        <begin position="13"/>
        <end position="87"/>
    </location>
</feature>
<feature type="sequence conflict" description="In Ref. 3; BAC42960." evidence="2" ref="3">
    <original>R</original>
    <variation>G</variation>
    <location>
        <position position="151"/>
    </location>
</feature>
<feature type="sequence conflict" description="In Ref. 3; BAC42960." evidence="2" ref="3">
    <original>A</original>
    <variation>V</variation>
    <location>
        <position position="286"/>
    </location>
</feature>
<organism>
    <name type="scientific">Arabidopsis thaliana</name>
    <name type="common">Mouse-ear cress</name>
    <dbReference type="NCBI Taxonomy" id="3702"/>
    <lineage>
        <taxon>Eukaryota</taxon>
        <taxon>Viridiplantae</taxon>
        <taxon>Streptophyta</taxon>
        <taxon>Embryophyta</taxon>
        <taxon>Tracheophyta</taxon>
        <taxon>Spermatophyta</taxon>
        <taxon>Magnoliopsida</taxon>
        <taxon>eudicotyledons</taxon>
        <taxon>Gunneridae</taxon>
        <taxon>Pentapetalae</taxon>
        <taxon>rosids</taxon>
        <taxon>malvids</taxon>
        <taxon>Brassicales</taxon>
        <taxon>Brassicaceae</taxon>
        <taxon>Camelineae</taxon>
        <taxon>Arabidopsis</taxon>
    </lineage>
</organism>
<sequence length="421" mass="45963">MPGNLEPLDLGIQIPYHFRCPISLDLMSDPVTISTGQTYDRTSIDSWIAMGNTTCPVTRVALSDFTLIPNHTLRRLIQEWCVANRSNGVERIPTPKQPADPISVRSLLSQASAITGTHVSVRSRAAAIRRLRGLARDSEKNRVLIAGHNAREILVRILFADIETTSLSSELVSESLALLVLLHMTETECEAVASDPSRVGFMTRLLFDSSIEIRVNAAALIEMVLTGAKSMDLKLIISGSDSIFEGVLDLLKNPISSRRALKIGIKAIFALCLVKQTRHLAISAGAPGILIDRLAADFDRCDTERGLATVELLCRLPEGCAAFGEHALTVPLMVKTILRVSDRATEYAAGALLALCTAEERCRDEAAAAGLVTQLLLLVQSDCTERAKRKAQMLLKLLRDSWPDDSTVHSDDFNRSEVAPF</sequence>
<proteinExistence type="evidence at transcript level"/>
<reference key="1">
    <citation type="journal article" date="2000" name="Nature">
        <title>Sequence and analysis of chromosome 1 of the plant Arabidopsis thaliana.</title>
        <authorList>
            <person name="Theologis A."/>
            <person name="Ecker J.R."/>
            <person name="Palm C.J."/>
            <person name="Federspiel N.A."/>
            <person name="Kaul S."/>
            <person name="White O."/>
            <person name="Alonso J."/>
            <person name="Altafi H."/>
            <person name="Araujo R."/>
            <person name="Bowman C.L."/>
            <person name="Brooks S.Y."/>
            <person name="Buehler E."/>
            <person name="Chan A."/>
            <person name="Chao Q."/>
            <person name="Chen H."/>
            <person name="Cheuk R.F."/>
            <person name="Chin C.W."/>
            <person name="Chung M.K."/>
            <person name="Conn L."/>
            <person name="Conway A.B."/>
            <person name="Conway A.R."/>
            <person name="Creasy T.H."/>
            <person name="Dewar K."/>
            <person name="Dunn P."/>
            <person name="Etgu P."/>
            <person name="Feldblyum T.V."/>
            <person name="Feng J.-D."/>
            <person name="Fong B."/>
            <person name="Fujii C.Y."/>
            <person name="Gill J.E."/>
            <person name="Goldsmith A.D."/>
            <person name="Haas B."/>
            <person name="Hansen N.F."/>
            <person name="Hughes B."/>
            <person name="Huizar L."/>
            <person name="Hunter J.L."/>
            <person name="Jenkins J."/>
            <person name="Johnson-Hopson C."/>
            <person name="Khan S."/>
            <person name="Khaykin E."/>
            <person name="Kim C.J."/>
            <person name="Koo H.L."/>
            <person name="Kremenetskaia I."/>
            <person name="Kurtz D.B."/>
            <person name="Kwan A."/>
            <person name="Lam B."/>
            <person name="Langin-Hooper S."/>
            <person name="Lee A."/>
            <person name="Lee J.M."/>
            <person name="Lenz C.A."/>
            <person name="Li J.H."/>
            <person name="Li Y.-P."/>
            <person name="Lin X."/>
            <person name="Liu S.X."/>
            <person name="Liu Z.A."/>
            <person name="Luros J.S."/>
            <person name="Maiti R."/>
            <person name="Marziali A."/>
            <person name="Militscher J."/>
            <person name="Miranda M."/>
            <person name="Nguyen M."/>
            <person name="Nierman W.C."/>
            <person name="Osborne B.I."/>
            <person name="Pai G."/>
            <person name="Peterson J."/>
            <person name="Pham P.K."/>
            <person name="Rizzo M."/>
            <person name="Rooney T."/>
            <person name="Rowley D."/>
            <person name="Sakano H."/>
            <person name="Salzberg S.L."/>
            <person name="Schwartz J.R."/>
            <person name="Shinn P."/>
            <person name="Southwick A.M."/>
            <person name="Sun H."/>
            <person name="Tallon L.J."/>
            <person name="Tambunga G."/>
            <person name="Toriumi M.J."/>
            <person name="Town C.D."/>
            <person name="Utterback T."/>
            <person name="Van Aken S."/>
            <person name="Vaysberg M."/>
            <person name="Vysotskaia V.S."/>
            <person name="Walker M."/>
            <person name="Wu D."/>
            <person name="Yu G."/>
            <person name="Fraser C.M."/>
            <person name="Venter J.C."/>
            <person name="Davis R.W."/>
        </authorList>
    </citation>
    <scope>NUCLEOTIDE SEQUENCE [LARGE SCALE GENOMIC DNA]</scope>
    <source>
        <strain>cv. Columbia</strain>
    </source>
</reference>
<reference key="2">
    <citation type="journal article" date="2017" name="Plant J.">
        <title>Araport11: a complete reannotation of the Arabidopsis thaliana reference genome.</title>
        <authorList>
            <person name="Cheng C.Y."/>
            <person name="Krishnakumar V."/>
            <person name="Chan A.P."/>
            <person name="Thibaud-Nissen F."/>
            <person name="Schobel S."/>
            <person name="Town C.D."/>
        </authorList>
    </citation>
    <scope>GENOME REANNOTATION</scope>
    <source>
        <strain>cv. Columbia</strain>
    </source>
</reference>
<reference key="3">
    <citation type="journal article" date="2002" name="Science">
        <title>Functional annotation of a full-length Arabidopsis cDNA collection.</title>
        <authorList>
            <person name="Seki M."/>
            <person name="Narusaka M."/>
            <person name="Kamiya A."/>
            <person name="Ishida J."/>
            <person name="Satou M."/>
            <person name="Sakurai T."/>
            <person name="Nakajima M."/>
            <person name="Enju A."/>
            <person name="Akiyama K."/>
            <person name="Oono Y."/>
            <person name="Muramatsu M."/>
            <person name="Hayashizaki Y."/>
            <person name="Kawai J."/>
            <person name="Carninci P."/>
            <person name="Itoh M."/>
            <person name="Ishii Y."/>
            <person name="Arakawa T."/>
            <person name="Shibata K."/>
            <person name="Shinagawa A."/>
            <person name="Shinozaki K."/>
        </authorList>
    </citation>
    <scope>NUCLEOTIDE SEQUENCE [LARGE SCALE MRNA]</scope>
    <source>
        <strain>cv. Columbia</strain>
    </source>
</reference>
<reference key="4">
    <citation type="submission" date="2006-09" db="EMBL/GenBank/DDBJ databases">
        <title>Arabidopsis ORF clones.</title>
        <authorList>
            <person name="Bautista V.R."/>
            <person name="Kim C.J."/>
            <person name="Chen H."/>
            <person name="Quinitio C."/>
            <person name="Ecker J.R."/>
        </authorList>
    </citation>
    <scope>NUCLEOTIDE SEQUENCE [LARGE SCALE MRNA]</scope>
    <source>
        <strain>cv. Columbia</strain>
    </source>
</reference>
<reference key="5">
    <citation type="journal article" date="2001" name="Trends Plant Sci.">
        <title>The U-box protein family in plants.</title>
        <authorList>
            <person name="Azevedo C."/>
            <person name="Santos-Rosa M.J."/>
            <person name="Shirasu K."/>
        </authorList>
    </citation>
    <scope>GENE FAMILY ORGANIZATION</scope>
    <scope>NOMENCLATURE</scope>
</reference>
<reference key="6">
    <citation type="journal article" date="2004" name="Plant Physiol.">
        <title>A large complement of the predicted Arabidopsis ARM repeat proteins are members of the U-box E3 ubiquitin ligase family.</title>
        <authorList>
            <person name="Mudgil Y."/>
            <person name="Shiu S.-H."/>
            <person name="Stone S.L."/>
            <person name="Salt J.N."/>
            <person name="Goring D.R."/>
        </authorList>
    </citation>
    <scope>GENE FAMILY ORGANIZATION</scope>
</reference>
<name>PUB26_ARATH</name>